<evidence type="ECO:0000255" key="1">
    <source>
        <dbReference type="HAMAP-Rule" id="MF_00416"/>
    </source>
</evidence>
<name>FLGI_ECO5E</name>
<protein>
    <recommendedName>
        <fullName evidence="1">Flagellar P-ring protein</fullName>
    </recommendedName>
    <alternativeName>
        <fullName evidence="1">Basal body P-ring protein</fullName>
    </alternativeName>
</protein>
<organism>
    <name type="scientific">Escherichia coli O157:H7 (strain EC4115 / EHEC)</name>
    <dbReference type="NCBI Taxonomy" id="444450"/>
    <lineage>
        <taxon>Bacteria</taxon>
        <taxon>Pseudomonadati</taxon>
        <taxon>Pseudomonadota</taxon>
        <taxon>Gammaproteobacteria</taxon>
        <taxon>Enterobacterales</taxon>
        <taxon>Enterobacteriaceae</taxon>
        <taxon>Escherichia</taxon>
    </lineage>
</organism>
<feature type="signal peptide" evidence="1">
    <location>
        <begin position="1"/>
        <end position="19"/>
    </location>
</feature>
<feature type="chain" id="PRO_1000123969" description="Flagellar P-ring protein">
    <location>
        <begin position="20"/>
        <end position="365"/>
    </location>
</feature>
<comment type="function">
    <text evidence="1">Assembles around the rod to form the L-ring and probably protects the motor/basal body from shearing forces during rotation.</text>
</comment>
<comment type="subunit">
    <text evidence="1">The basal body constitutes a major portion of the flagellar organelle and consists of four rings (L,P,S, and M) mounted on a central rod.</text>
</comment>
<comment type="subcellular location">
    <subcellularLocation>
        <location evidence="1">Periplasm</location>
    </subcellularLocation>
    <subcellularLocation>
        <location evidence="1">Bacterial flagellum basal body</location>
    </subcellularLocation>
</comment>
<comment type="similarity">
    <text evidence="1">Belongs to the FlgI family.</text>
</comment>
<accession>B5YVV0</accession>
<proteinExistence type="inferred from homology"/>
<sequence length="365" mass="38183">MIKFLSALILLLVTTAAQAERIRDLTSVQGVRQNSLIGYGLVVGLDGTGDQTTQTPFTTQTLNNMLSQLGITVPTGTNMQLKNVAAVMVTASLPPFGRQGQTIDVVVSSMGNAKSLRGGTLLMTPLKGVDSQVYALAQGNILVGGAGASAGGSSVQVNQLNGGRITNGAVIERELPSQFGVGNTLNLQLNDEDFSMAQQIADTINRVRGYGSATALDARTIQVRVPSGNSSQVRFLADIQNMQVNVTPQDAKVVINSRTGSVVMNREVTLDSCAIAQGNLSVTVNRQANVSQPDTPFGGGQTVVTPQTQIDLRQSGGSLQSVRSSASLNNVVRALNALGATPMDLMSILQSMQSAGCLRAKLEII</sequence>
<dbReference type="EMBL" id="CP001164">
    <property type="protein sequence ID" value="ACI37682.1"/>
    <property type="molecule type" value="Genomic_DNA"/>
</dbReference>
<dbReference type="RefSeq" id="WP_000589319.1">
    <property type="nucleotide sequence ID" value="NC_011353.1"/>
</dbReference>
<dbReference type="SMR" id="B5YVV0"/>
<dbReference type="KEGG" id="ecf:ECH74115_1459"/>
<dbReference type="HOGENOM" id="CLU_045235_1_0_6"/>
<dbReference type="GO" id="GO:0009428">
    <property type="term" value="C:bacterial-type flagellum basal body, distal rod, P ring"/>
    <property type="evidence" value="ECO:0007669"/>
    <property type="project" value="InterPro"/>
</dbReference>
<dbReference type="GO" id="GO:0030288">
    <property type="term" value="C:outer membrane-bounded periplasmic space"/>
    <property type="evidence" value="ECO:0007669"/>
    <property type="project" value="InterPro"/>
</dbReference>
<dbReference type="GO" id="GO:0005198">
    <property type="term" value="F:structural molecule activity"/>
    <property type="evidence" value="ECO:0007669"/>
    <property type="project" value="InterPro"/>
</dbReference>
<dbReference type="GO" id="GO:0071973">
    <property type="term" value="P:bacterial-type flagellum-dependent cell motility"/>
    <property type="evidence" value="ECO:0007669"/>
    <property type="project" value="InterPro"/>
</dbReference>
<dbReference type="HAMAP" id="MF_00416">
    <property type="entry name" value="FlgI"/>
    <property type="match status" value="1"/>
</dbReference>
<dbReference type="InterPro" id="IPR001782">
    <property type="entry name" value="Flag_FlgI"/>
</dbReference>
<dbReference type="NCBIfam" id="NF003676">
    <property type="entry name" value="PRK05303.1"/>
    <property type="match status" value="1"/>
</dbReference>
<dbReference type="PANTHER" id="PTHR30381">
    <property type="entry name" value="FLAGELLAR P-RING PERIPLASMIC PROTEIN FLGI"/>
    <property type="match status" value="1"/>
</dbReference>
<dbReference type="PANTHER" id="PTHR30381:SF0">
    <property type="entry name" value="FLAGELLAR P-RING PROTEIN"/>
    <property type="match status" value="1"/>
</dbReference>
<dbReference type="Pfam" id="PF02119">
    <property type="entry name" value="FlgI"/>
    <property type="match status" value="1"/>
</dbReference>
<dbReference type="PRINTS" id="PR01010">
    <property type="entry name" value="FLGPRINGFLGI"/>
</dbReference>
<gene>
    <name evidence="1" type="primary">flgI</name>
    <name type="ordered locus">ECH74115_1459</name>
</gene>
<reference key="1">
    <citation type="journal article" date="2011" name="Proc. Natl. Acad. Sci. U.S.A.">
        <title>Genomic anatomy of Escherichia coli O157:H7 outbreaks.</title>
        <authorList>
            <person name="Eppinger M."/>
            <person name="Mammel M.K."/>
            <person name="Leclerc J.E."/>
            <person name="Ravel J."/>
            <person name="Cebula T.A."/>
        </authorList>
    </citation>
    <scope>NUCLEOTIDE SEQUENCE [LARGE SCALE GENOMIC DNA]</scope>
    <source>
        <strain>EC4115 / EHEC</strain>
    </source>
</reference>
<keyword id="KW-0975">Bacterial flagellum</keyword>
<keyword id="KW-0574">Periplasm</keyword>
<keyword id="KW-0732">Signal</keyword>